<proteinExistence type="inferred from homology"/>
<dbReference type="EC" id="2.3.1.129" evidence="1"/>
<dbReference type="EMBL" id="CP000814">
    <property type="protein sequence ID" value="ABV51850.1"/>
    <property type="molecule type" value="Genomic_DNA"/>
</dbReference>
<dbReference type="RefSeq" id="WP_002861057.1">
    <property type="nucleotide sequence ID" value="NC_009839.1"/>
</dbReference>
<dbReference type="SMR" id="A8FK63"/>
<dbReference type="KEGG" id="cju:C8J_0251"/>
<dbReference type="HOGENOM" id="CLU_061249_0_0_7"/>
<dbReference type="UniPathway" id="UPA00359">
    <property type="reaction ID" value="UER00477"/>
</dbReference>
<dbReference type="GO" id="GO:0005737">
    <property type="term" value="C:cytoplasm"/>
    <property type="evidence" value="ECO:0007669"/>
    <property type="project" value="UniProtKB-SubCell"/>
</dbReference>
<dbReference type="GO" id="GO:0016020">
    <property type="term" value="C:membrane"/>
    <property type="evidence" value="ECO:0007669"/>
    <property type="project" value="GOC"/>
</dbReference>
<dbReference type="GO" id="GO:0008780">
    <property type="term" value="F:acyl-[acyl-carrier-protein]-UDP-N-acetylglucosamine O-acyltransferase activity"/>
    <property type="evidence" value="ECO:0007669"/>
    <property type="project" value="UniProtKB-UniRule"/>
</dbReference>
<dbReference type="GO" id="GO:0009245">
    <property type="term" value="P:lipid A biosynthetic process"/>
    <property type="evidence" value="ECO:0007669"/>
    <property type="project" value="UniProtKB-UniRule"/>
</dbReference>
<dbReference type="CDD" id="cd03351">
    <property type="entry name" value="LbH_UDP-GlcNAc_AT"/>
    <property type="match status" value="1"/>
</dbReference>
<dbReference type="Gene3D" id="2.160.10.10">
    <property type="entry name" value="Hexapeptide repeat proteins"/>
    <property type="match status" value="1"/>
</dbReference>
<dbReference type="Gene3D" id="1.20.1180.10">
    <property type="entry name" value="Udp N-acetylglucosamine O-acyltransferase, C-terminal domain"/>
    <property type="match status" value="1"/>
</dbReference>
<dbReference type="HAMAP" id="MF_00387">
    <property type="entry name" value="LpxA"/>
    <property type="match status" value="1"/>
</dbReference>
<dbReference type="InterPro" id="IPR029098">
    <property type="entry name" value="Acetyltransf_C"/>
</dbReference>
<dbReference type="InterPro" id="IPR037157">
    <property type="entry name" value="Acetyltransf_C_sf"/>
</dbReference>
<dbReference type="InterPro" id="IPR001451">
    <property type="entry name" value="Hexapep"/>
</dbReference>
<dbReference type="InterPro" id="IPR018357">
    <property type="entry name" value="Hexapep_transf_CS"/>
</dbReference>
<dbReference type="InterPro" id="IPR010137">
    <property type="entry name" value="Lipid_A_LpxA"/>
</dbReference>
<dbReference type="InterPro" id="IPR011004">
    <property type="entry name" value="Trimer_LpxA-like_sf"/>
</dbReference>
<dbReference type="NCBIfam" id="TIGR01852">
    <property type="entry name" value="lipid_A_lpxA"/>
    <property type="match status" value="1"/>
</dbReference>
<dbReference type="NCBIfam" id="NF003657">
    <property type="entry name" value="PRK05289.1"/>
    <property type="match status" value="1"/>
</dbReference>
<dbReference type="PANTHER" id="PTHR43480">
    <property type="entry name" value="ACYL-[ACYL-CARRIER-PROTEIN]--UDP-N-ACETYLGLUCOSAMINE O-ACYLTRANSFERASE"/>
    <property type="match status" value="1"/>
</dbReference>
<dbReference type="PANTHER" id="PTHR43480:SF1">
    <property type="entry name" value="ACYL-[ACYL-CARRIER-PROTEIN]--UDP-N-ACETYLGLUCOSAMINE O-ACYLTRANSFERASE, MITOCHONDRIAL-RELATED"/>
    <property type="match status" value="1"/>
</dbReference>
<dbReference type="Pfam" id="PF13720">
    <property type="entry name" value="Acetyltransf_11"/>
    <property type="match status" value="1"/>
</dbReference>
<dbReference type="Pfam" id="PF00132">
    <property type="entry name" value="Hexapep"/>
    <property type="match status" value="1"/>
</dbReference>
<dbReference type="PIRSF" id="PIRSF000456">
    <property type="entry name" value="UDP-GlcNAc_acltr"/>
    <property type="match status" value="1"/>
</dbReference>
<dbReference type="SUPFAM" id="SSF51161">
    <property type="entry name" value="Trimeric LpxA-like enzymes"/>
    <property type="match status" value="1"/>
</dbReference>
<dbReference type="PROSITE" id="PS00101">
    <property type="entry name" value="HEXAPEP_TRANSFERASES"/>
    <property type="match status" value="2"/>
</dbReference>
<comment type="function">
    <text evidence="1">Involved in the biosynthesis of lipid A, a phosphorylated glycolipid that anchors the lipopolysaccharide to the outer membrane of the cell.</text>
</comment>
<comment type="catalytic activity">
    <reaction evidence="1">
        <text>a (3R)-hydroxyacyl-[ACP] + UDP-N-acetyl-alpha-D-glucosamine = a UDP-3-O-[(3R)-3-hydroxyacyl]-N-acetyl-alpha-D-glucosamine + holo-[ACP]</text>
        <dbReference type="Rhea" id="RHEA:67812"/>
        <dbReference type="Rhea" id="RHEA-COMP:9685"/>
        <dbReference type="Rhea" id="RHEA-COMP:9945"/>
        <dbReference type="ChEBI" id="CHEBI:57705"/>
        <dbReference type="ChEBI" id="CHEBI:64479"/>
        <dbReference type="ChEBI" id="CHEBI:78827"/>
        <dbReference type="ChEBI" id="CHEBI:173225"/>
        <dbReference type="EC" id="2.3.1.129"/>
    </reaction>
</comment>
<comment type="pathway">
    <text evidence="1">Glycolipid biosynthesis; lipid IV(A) biosynthesis; lipid IV(A) from (3R)-3-hydroxytetradecanoyl-[acyl-carrier-protein] and UDP-N-acetyl-alpha-D-glucosamine: step 1/6.</text>
</comment>
<comment type="subunit">
    <text evidence="1">Homotrimer.</text>
</comment>
<comment type="subcellular location">
    <subcellularLocation>
        <location evidence="1">Cytoplasm</location>
    </subcellularLocation>
</comment>
<comment type="similarity">
    <text evidence="1">Belongs to the transferase hexapeptide repeat family. LpxA subfamily.</text>
</comment>
<sequence>MKKIHPSAVIEEGAQLGDDVVIEAYAYVGKDTKIGNDVVIKQGARILSDTTIGDHSRVFSYAIVGDIPQDISYKEEQKSGVVIGKNATIREFATINSGTAKGDGFTRIGDNAFIMAYCHIAHDCLLGNNIILANNATLAGHVELGDFTVVGGLTPIHQFVKVGEGCMIAGASALSQDIVPFCLAEGNRASIRSLNLVGIRRRFDKDEVDRLSRAFKTLFRQGDLKENAKNLLENQESENVKKMCHFILETKRGIPVYRGKNNA</sequence>
<gene>
    <name evidence="1" type="primary">lpxA</name>
    <name type="ordered locus">C8J_0251</name>
</gene>
<organism>
    <name type="scientific">Campylobacter jejuni subsp. jejuni serotype O:6 (strain 81116 / NCTC 11828)</name>
    <dbReference type="NCBI Taxonomy" id="407148"/>
    <lineage>
        <taxon>Bacteria</taxon>
        <taxon>Pseudomonadati</taxon>
        <taxon>Campylobacterota</taxon>
        <taxon>Epsilonproteobacteria</taxon>
        <taxon>Campylobacterales</taxon>
        <taxon>Campylobacteraceae</taxon>
        <taxon>Campylobacter</taxon>
    </lineage>
</organism>
<protein>
    <recommendedName>
        <fullName evidence="1">Acyl-[acyl-carrier-protein]--UDP-N-acetylglucosamine O-acyltransferase</fullName>
        <shortName evidence="1">UDP-N-acetylglucosamine acyltransferase</shortName>
        <ecNumber evidence="1">2.3.1.129</ecNumber>
    </recommendedName>
</protein>
<accession>A8FK63</accession>
<feature type="chain" id="PRO_1000072206" description="Acyl-[acyl-carrier-protein]--UDP-N-acetylglucosamine O-acyltransferase">
    <location>
        <begin position="1"/>
        <end position="263"/>
    </location>
</feature>
<reference key="1">
    <citation type="journal article" date="2007" name="J. Bacteriol.">
        <title>The complete genome sequence of Campylobacter jejuni strain 81116 (NCTC11828).</title>
        <authorList>
            <person name="Pearson B.M."/>
            <person name="Gaskin D.J.H."/>
            <person name="Segers R.P.A.M."/>
            <person name="Wells J.M."/>
            <person name="Nuijten P.J.M."/>
            <person name="van Vliet A.H.M."/>
        </authorList>
    </citation>
    <scope>NUCLEOTIDE SEQUENCE [LARGE SCALE GENOMIC DNA]</scope>
    <source>
        <strain>81116 / NCTC 11828</strain>
    </source>
</reference>
<name>LPXA_CAMJ8</name>
<evidence type="ECO:0000255" key="1">
    <source>
        <dbReference type="HAMAP-Rule" id="MF_00387"/>
    </source>
</evidence>
<keyword id="KW-0012">Acyltransferase</keyword>
<keyword id="KW-0963">Cytoplasm</keyword>
<keyword id="KW-0441">Lipid A biosynthesis</keyword>
<keyword id="KW-0444">Lipid biosynthesis</keyword>
<keyword id="KW-0443">Lipid metabolism</keyword>
<keyword id="KW-0677">Repeat</keyword>
<keyword id="KW-0808">Transferase</keyword>